<dbReference type="EMBL" id="AM167904">
    <property type="protein sequence ID" value="CAJ50825.1"/>
    <property type="molecule type" value="Genomic_DNA"/>
</dbReference>
<dbReference type="RefSeq" id="WP_012418853.1">
    <property type="nucleotide sequence ID" value="NC_010645.1"/>
</dbReference>
<dbReference type="SMR" id="Q2KU35"/>
<dbReference type="STRING" id="360910.BAV3215"/>
<dbReference type="GeneID" id="92933527"/>
<dbReference type="KEGG" id="bav:BAV3215"/>
<dbReference type="eggNOG" id="COG0224">
    <property type="taxonomic scope" value="Bacteria"/>
</dbReference>
<dbReference type="HOGENOM" id="CLU_050669_0_1_4"/>
<dbReference type="OrthoDB" id="9812769at2"/>
<dbReference type="Proteomes" id="UP000001977">
    <property type="component" value="Chromosome"/>
</dbReference>
<dbReference type="GO" id="GO:0005886">
    <property type="term" value="C:plasma membrane"/>
    <property type="evidence" value="ECO:0007669"/>
    <property type="project" value="UniProtKB-SubCell"/>
</dbReference>
<dbReference type="GO" id="GO:0045259">
    <property type="term" value="C:proton-transporting ATP synthase complex"/>
    <property type="evidence" value="ECO:0007669"/>
    <property type="project" value="UniProtKB-KW"/>
</dbReference>
<dbReference type="GO" id="GO:0005524">
    <property type="term" value="F:ATP binding"/>
    <property type="evidence" value="ECO:0007669"/>
    <property type="project" value="UniProtKB-UniRule"/>
</dbReference>
<dbReference type="GO" id="GO:0046933">
    <property type="term" value="F:proton-transporting ATP synthase activity, rotational mechanism"/>
    <property type="evidence" value="ECO:0007669"/>
    <property type="project" value="UniProtKB-UniRule"/>
</dbReference>
<dbReference type="GO" id="GO:0042777">
    <property type="term" value="P:proton motive force-driven plasma membrane ATP synthesis"/>
    <property type="evidence" value="ECO:0007669"/>
    <property type="project" value="UniProtKB-UniRule"/>
</dbReference>
<dbReference type="CDD" id="cd12151">
    <property type="entry name" value="F1-ATPase_gamma"/>
    <property type="match status" value="1"/>
</dbReference>
<dbReference type="FunFam" id="1.10.287.80:FF:000005">
    <property type="entry name" value="ATP synthase gamma chain"/>
    <property type="match status" value="1"/>
</dbReference>
<dbReference type="Gene3D" id="3.40.1380.10">
    <property type="match status" value="1"/>
</dbReference>
<dbReference type="Gene3D" id="1.10.287.80">
    <property type="entry name" value="ATP synthase, gamma subunit, helix hairpin domain"/>
    <property type="match status" value="2"/>
</dbReference>
<dbReference type="HAMAP" id="MF_00815">
    <property type="entry name" value="ATP_synth_gamma_bact"/>
    <property type="match status" value="1"/>
</dbReference>
<dbReference type="InterPro" id="IPR035968">
    <property type="entry name" value="ATP_synth_F1_ATPase_gsu"/>
</dbReference>
<dbReference type="InterPro" id="IPR000131">
    <property type="entry name" value="ATP_synth_F1_gsu"/>
</dbReference>
<dbReference type="InterPro" id="IPR023632">
    <property type="entry name" value="ATP_synth_F1_gsu_CS"/>
</dbReference>
<dbReference type="NCBIfam" id="TIGR01146">
    <property type="entry name" value="ATPsyn_F1gamma"/>
    <property type="match status" value="1"/>
</dbReference>
<dbReference type="NCBIfam" id="NF004144">
    <property type="entry name" value="PRK05621.1-1"/>
    <property type="match status" value="1"/>
</dbReference>
<dbReference type="PANTHER" id="PTHR11693">
    <property type="entry name" value="ATP SYNTHASE GAMMA CHAIN"/>
    <property type="match status" value="1"/>
</dbReference>
<dbReference type="PANTHER" id="PTHR11693:SF22">
    <property type="entry name" value="ATP SYNTHASE SUBUNIT GAMMA, MITOCHONDRIAL"/>
    <property type="match status" value="1"/>
</dbReference>
<dbReference type="Pfam" id="PF00231">
    <property type="entry name" value="ATP-synt"/>
    <property type="match status" value="1"/>
</dbReference>
<dbReference type="PRINTS" id="PR00126">
    <property type="entry name" value="ATPASEGAMMA"/>
</dbReference>
<dbReference type="SUPFAM" id="SSF52943">
    <property type="entry name" value="ATP synthase (F1-ATPase), gamma subunit"/>
    <property type="match status" value="1"/>
</dbReference>
<dbReference type="PROSITE" id="PS00153">
    <property type="entry name" value="ATPASE_GAMMA"/>
    <property type="match status" value="1"/>
</dbReference>
<feature type="chain" id="PRO_1000053163" description="ATP synthase gamma chain">
    <location>
        <begin position="1"/>
        <end position="301"/>
    </location>
</feature>
<protein>
    <recommendedName>
        <fullName evidence="1">ATP synthase gamma chain</fullName>
    </recommendedName>
    <alternativeName>
        <fullName evidence="1">ATP synthase F1 sector gamma subunit</fullName>
    </alternativeName>
    <alternativeName>
        <fullName evidence="1">F-ATPase gamma subunit</fullName>
    </alternativeName>
</protein>
<name>ATPG_BORA1</name>
<accession>Q2KU35</accession>
<proteinExistence type="inferred from homology"/>
<reference key="1">
    <citation type="journal article" date="2006" name="J. Bacteriol.">
        <title>Comparison of the genome sequence of the poultry pathogen Bordetella avium with those of B. bronchiseptica, B. pertussis, and B. parapertussis reveals extensive diversity in surface structures associated with host interaction.</title>
        <authorList>
            <person name="Sebaihia M."/>
            <person name="Preston A."/>
            <person name="Maskell D.J."/>
            <person name="Kuzmiak H."/>
            <person name="Connell T.D."/>
            <person name="King N.D."/>
            <person name="Orndorff P.E."/>
            <person name="Miyamoto D.M."/>
            <person name="Thomson N.R."/>
            <person name="Harris D."/>
            <person name="Goble A."/>
            <person name="Lord A."/>
            <person name="Murphy L."/>
            <person name="Quail M.A."/>
            <person name="Rutter S."/>
            <person name="Squares R."/>
            <person name="Squares S."/>
            <person name="Woodward J."/>
            <person name="Parkhill J."/>
            <person name="Temple L.M."/>
        </authorList>
    </citation>
    <scope>NUCLEOTIDE SEQUENCE [LARGE SCALE GENOMIC DNA]</scope>
    <source>
        <strain>197N</strain>
    </source>
</reference>
<evidence type="ECO:0000255" key="1">
    <source>
        <dbReference type="HAMAP-Rule" id="MF_00815"/>
    </source>
</evidence>
<keyword id="KW-0066">ATP synthesis</keyword>
<keyword id="KW-0997">Cell inner membrane</keyword>
<keyword id="KW-1003">Cell membrane</keyword>
<keyword id="KW-0139">CF(1)</keyword>
<keyword id="KW-0375">Hydrogen ion transport</keyword>
<keyword id="KW-0406">Ion transport</keyword>
<keyword id="KW-0472">Membrane</keyword>
<keyword id="KW-1185">Reference proteome</keyword>
<keyword id="KW-0813">Transport</keyword>
<sequence length="301" mass="33492">MPGIKEIRTKIKSVQNTRKITKAMEMVAASKMRKAQERMRAGRPYANKVREIAAHLMQANPEYNHPYLQQREIKAVGVVLVTTDKGLCGGLNTNISRLTLNRFKDFEAQNIQVRATAFGNKGLGLLTRIGTKLVSQETQLGDKPDLDRLLGAIKVQLDDYLEGRIDALYVATTRFVNTMKQEPVFLRLLPLASGLNDPFQSGLEHLESTTEVKSDYGWDYIYEPDAKSVIDDLLQRYVEGLLYQAVAENMASEQSARMVAMKAASDNAKKVIGELQLVYNKTRQAAITKEISEIVGGAAAV</sequence>
<gene>
    <name evidence="1" type="primary">atpG</name>
    <name type="ordered locus">BAV3215</name>
</gene>
<comment type="function">
    <text evidence="1">Produces ATP from ADP in the presence of a proton gradient across the membrane. The gamma chain is believed to be important in regulating ATPase activity and the flow of protons through the CF(0) complex.</text>
</comment>
<comment type="subunit">
    <text evidence="1">F-type ATPases have 2 components, CF(1) - the catalytic core - and CF(0) - the membrane proton channel. CF(1) has five subunits: alpha(3), beta(3), gamma(1), delta(1), epsilon(1). CF(0) has three main subunits: a, b and c.</text>
</comment>
<comment type="subcellular location">
    <subcellularLocation>
        <location evidence="1">Cell inner membrane</location>
        <topology evidence="1">Peripheral membrane protein</topology>
    </subcellularLocation>
</comment>
<comment type="similarity">
    <text evidence="1">Belongs to the ATPase gamma chain family.</text>
</comment>
<organism>
    <name type="scientific">Bordetella avium (strain 197N)</name>
    <dbReference type="NCBI Taxonomy" id="360910"/>
    <lineage>
        <taxon>Bacteria</taxon>
        <taxon>Pseudomonadati</taxon>
        <taxon>Pseudomonadota</taxon>
        <taxon>Betaproteobacteria</taxon>
        <taxon>Burkholderiales</taxon>
        <taxon>Alcaligenaceae</taxon>
        <taxon>Bordetella</taxon>
    </lineage>
</organism>